<name>TM107_HUMAN</name>
<keyword id="KW-0025">Alternative splicing</keyword>
<keyword id="KW-0966">Cell projection</keyword>
<keyword id="KW-1186">Ciliopathy</keyword>
<keyword id="KW-0970">Cilium biogenesis/degradation</keyword>
<keyword id="KW-0217">Developmental protein</keyword>
<keyword id="KW-0225">Disease variant</keyword>
<keyword id="KW-0325">Glycoprotein</keyword>
<keyword id="KW-0981">Meckel syndrome</keyword>
<keyword id="KW-0472">Membrane</keyword>
<keyword id="KW-1267">Proteomics identification</keyword>
<keyword id="KW-1185">Reference proteome</keyword>
<keyword id="KW-0812">Transmembrane</keyword>
<keyword id="KW-1133">Transmembrane helix</keyword>
<dbReference type="EMBL" id="AF311338">
    <property type="protein sequence ID" value="AAK38512.1"/>
    <property type="status" value="ALT_FRAME"/>
    <property type="molecule type" value="mRNA"/>
</dbReference>
<dbReference type="EMBL" id="AY358525">
    <property type="protein sequence ID" value="AAQ88889.1"/>
    <property type="molecule type" value="mRNA"/>
</dbReference>
<dbReference type="EMBL" id="AK127891">
    <property type="protein sequence ID" value="BAC87177.1"/>
    <property type="molecule type" value="mRNA"/>
</dbReference>
<dbReference type="EMBL" id="AC129492">
    <property type="status" value="NOT_ANNOTATED_CDS"/>
    <property type="molecule type" value="Genomic_DNA"/>
</dbReference>
<dbReference type="EMBL" id="BC070231">
    <property type="protein sequence ID" value="AAH70231.1"/>
    <property type="molecule type" value="mRNA"/>
</dbReference>
<dbReference type="EMBL" id="BC127649">
    <property type="protein sequence ID" value="AAI27650.1"/>
    <property type="molecule type" value="mRNA"/>
</dbReference>
<dbReference type="CCDS" id="CCDS11132.1">
    <molecule id="Q6UX40-4"/>
</dbReference>
<dbReference type="CCDS" id="CCDS45607.1">
    <molecule id="Q6UX40-1"/>
</dbReference>
<dbReference type="CCDS" id="CCDS86572.1">
    <molecule id="Q6UX40-3"/>
</dbReference>
<dbReference type="RefSeq" id="NP_001338207.1">
    <molecule id="Q6UX40-3"/>
    <property type="nucleotide sequence ID" value="NM_001351278.2"/>
</dbReference>
<dbReference type="RefSeq" id="NP_115730.2">
    <molecule id="Q6UX40-4"/>
    <property type="nucleotide sequence ID" value="NM_032354.3"/>
</dbReference>
<dbReference type="RefSeq" id="NP_898888.1">
    <molecule id="Q6UX40-1"/>
    <property type="nucleotide sequence ID" value="NM_183065.4"/>
</dbReference>
<dbReference type="BioGRID" id="124040">
    <property type="interactions" value="51"/>
</dbReference>
<dbReference type="ComplexPortal" id="CPX-2531">
    <property type="entry name" value="MKS transition zone complex"/>
</dbReference>
<dbReference type="DIP" id="DIP-61993N"/>
<dbReference type="FunCoup" id="Q6UX40">
    <property type="interactions" value="146"/>
</dbReference>
<dbReference type="IntAct" id="Q6UX40">
    <property type="interactions" value="47"/>
</dbReference>
<dbReference type="STRING" id="9606.ENSP00000314116"/>
<dbReference type="GlyCosmos" id="Q6UX40">
    <property type="glycosylation" value="1 site, No reported glycans"/>
</dbReference>
<dbReference type="GlyGen" id="Q6UX40">
    <property type="glycosylation" value="1 site"/>
</dbReference>
<dbReference type="BioMuta" id="TMEM107"/>
<dbReference type="DMDM" id="74738174"/>
<dbReference type="MassIVE" id="Q6UX40"/>
<dbReference type="PaxDb" id="9606-ENSP00000314116"/>
<dbReference type="PeptideAtlas" id="Q6UX40"/>
<dbReference type="TopDownProteomics" id="Q6UX40-4">
    <molecule id="Q6UX40-4"/>
</dbReference>
<dbReference type="Antibodypedia" id="42946">
    <property type="antibodies" value="51 antibodies from 19 providers"/>
</dbReference>
<dbReference type="DNASU" id="84314"/>
<dbReference type="Ensembl" id="ENST00000316425.9">
    <molecule id="Q6UX40-4"/>
    <property type="protein sequence ID" value="ENSP00000314116.5"/>
    <property type="gene ID" value="ENSG00000179029.15"/>
</dbReference>
<dbReference type="Ensembl" id="ENST00000437139.7">
    <molecule id="Q6UX40-1"/>
    <property type="protein sequence ID" value="ENSP00000402732.2"/>
    <property type="gene ID" value="ENSG00000179029.15"/>
</dbReference>
<dbReference type="Ensembl" id="ENST00000533070.5">
    <molecule id="Q6UX40-3"/>
    <property type="protein sequence ID" value="ENSP00000436674.1"/>
    <property type="gene ID" value="ENSG00000179029.15"/>
</dbReference>
<dbReference type="GeneID" id="84314"/>
<dbReference type="KEGG" id="hsa:84314"/>
<dbReference type="MANE-Select" id="ENST00000437139.7">
    <property type="protein sequence ID" value="ENSP00000402732.2"/>
    <property type="RefSeq nucleotide sequence ID" value="NM_183065.4"/>
    <property type="RefSeq protein sequence ID" value="NP_898888.1"/>
</dbReference>
<dbReference type="UCSC" id="uc002gkg.5">
    <molecule id="Q6UX40-1"/>
    <property type="organism name" value="human"/>
</dbReference>
<dbReference type="AGR" id="HGNC:28128"/>
<dbReference type="CTD" id="84314"/>
<dbReference type="DisGeNET" id="84314"/>
<dbReference type="GeneCards" id="TMEM107"/>
<dbReference type="GeneReviews" id="TMEM107"/>
<dbReference type="HGNC" id="HGNC:28128">
    <property type="gene designation" value="TMEM107"/>
</dbReference>
<dbReference type="HPA" id="ENSG00000179029">
    <property type="expression patterns" value="Tissue enhanced (choroid)"/>
</dbReference>
<dbReference type="MalaCards" id="TMEM107"/>
<dbReference type="MIM" id="616183">
    <property type="type" value="gene"/>
</dbReference>
<dbReference type="MIM" id="617562">
    <property type="type" value="phenotype"/>
</dbReference>
<dbReference type="MIM" id="617563">
    <property type="type" value="phenotype"/>
</dbReference>
<dbReference type="neXtProt" id="NX_Q6UX40"/>
<dbReference type="OpenTargets" id="ENSG00000179029"/>
<dbReference type="Orphanet" id="564">
    <property type="disease" value="Meckel syndrome"/>
</dbReference>
<dbReference type="PharmGKB" id="PA142670758"/>
<dbReference type="VEuPathDB" id="HostDB:ENSG00000179029"/>
<dbReference type="eggNOG" id="ENOG502RZG7">
    <property type="taxonomic scope" value="Eukaryota"/>
</dbReference>
<dbReference type="GeneTree" id="ENSGT00390000014827"/>
<dbReference type="HOGENOM" id="CLU_127745_0_0_1"/>
<dbReference type="InParanoid" id="Q6UX40"/>
<dbReference type="OMA" id="VCLKKVP"/>
<dbReference type="OrthoDB" id="2114471at2759"/>
<dbReference type="PAN-GO" id="Q6UX40">
    <property type="GO annotations" value="3 GO annotations based on evolutionary models"/>
</dbReference>
<dbReference type="PhylomeDB" id="Q6UX40"/>
<dbReference type="TreeFam" id="TF328441"/>
<dbReference type="PathwayCommons" id="Q6UX40"/>
<dbReference type="SignaLink" id="Q6UX40"/>
<dbReference type="BioGRID-ORCS" id="84314">
    <property type="hits" value="16 hits in 1162 CRISPR screens"/>
</dbReference>
<dbReference type="ChiTaRS" id="TMEM107">
    <property type="organism name" value="human"/>
</dbReference>
<dbReference type="GenomeRNAi" id="84314"/>
<dbReference type="Pharos" id="Q6UX40">
    <property type="development level" value="Tbio"/>
</dbReference>
<dbReference type="PRO" id="PR:Q6UX40"/>
<dbReference type="Proteomes" id="UP000005640">
    <property type="component" value="Chromosome 17"/>
</dbReference>
<dbReference type="RNAct" id="Q6UX40">
    <property type="molecule type" value="protein"/>
</dbReference>
<dbReference type="Bgee" id="ENSG00000179029">
    <property type="expression patterns" value="Expressed in bronchial epithelial cell and 174 other cell types or tissues"/>
</dbReference>
<dbReference type="ExpressionAtlas" id="Q6UX40">
    <property type="expression patterns" value="baseline and differential"/>
</dbReference>
<dbReference type="GO" id="GO:0035869">
    <property type="term" value="C:ciliary transition zone"/>
    <property type="evidence" value="ECO:0000314"/>
    <property type="project" value="WormBase"/>
</dbReference>
<dbReference type="GO" id="GO:0016020">
    <property type="term" value="C:membrane"/>
    <property type="evidence" value="ECO:0007669"/>
    <property type="project" value="UniProtKB-SubCell"/>
</dbReference>
<dbReference type="GO" id="GO:0036038">
    <property type="term" value="C:MKS complex"/>
    <property type="evidence" value="ECO:0000314"/>
    <property type="project" value="UniProtKB"/>
</dbReference>
<dbReference type="GO" id="GO:0060271">
    <property type="term" value="P:cilium assembly"/>
    <property type="evidence" value="ECO:0000314"/>
    <property type="project" value="UniProtKB"/>
</dbReference>
<dbReference type="GO" id="GO:0097094">
    <property type="term" value="P:craniofacial suture morphogenesis"/>
    <property type="evidence" value="ECO:0007669"/>
    <property type="project" value="Ensembl"/>
</dbReference>
<dbReference type="GO" id="GO:0003127">
    <property type="term" value="P:detection of nodal flow"/>
    <property type="evidence" value="ECO:0007669"/>
    <property type="project" value="Ensembl"/>
</dbReference>
<dbReference type="GO" id="GO:0042733">
    <property type="term" value="P:embryonic digit morphogenesis"/>
    <property type="evidence" value="ECO:0007669"/>
    <property type="project" value="Ensembl"/>
</dbReference>
<dbReference type="GO" id="GO:0021532">
    <property type="term" value="P:neural tube patterning"/>
    <property type="evidence" value="ECO:0007669"/>
    <property type="project" value="Ensembl"/>
</dbReference>
<dbReference type="GO" id="GO:1905515">
    <property type="term" value="P:non-motile cilium assembly"/>
    <property type="evidence" value="ECO:0000315"/>
    <property type="project" value="WormBase"/>
</dbReference>
<dbReference type="GO" id="GO:1904491">
    <property type="term" value="P:protein localization to ciliary transition zone"/>
    <property type="evidence" value="ECO:0000318"/>
    <property type="project" value="GO_Central"/>
</dbReference>
<dbReference type="GO" id="GO:0010468">
    <property type="term" value="P:regulation of gene expression"/>
    <property type="evidence" value="ECO:0007669"/>
    <property type="project" value="Ensembl"/>
</dbReference>
<dbReference type="GO" id="GO:0060021">
    <property type="term" value="P:roof of mouth development"/>
    <property type="evidence" value="ECO:0007669"/>
    <property type="project" value="Ensembl"/>
</dbReference>
<dbReference type="InterPro" id="IPR029248">
    <property type="entry name" value="TMEM107"/>
</dbReference>
<dbReference type="PANTHER" id="PTHR34341">
    <property type="entry name" value="TRANSMEMBRANE PROTEIN 107"/>
    <property type="match status" value="1"/>
</dbReference>
<dbReference type="PANTHER" id="PTHR34341:SF1">
    <property type="entry name" value="TRANSMEMBRANE PROTEIN 107"/>
    <property type="match status" value="1"/>
</dbReference>
<dbReference type="Pfam" id="PF14995">
    <property type="entry name" value="TMEM107"/>
    <property type="match status" value="1"/>
</dbReference>
<protein>
    <recommendedName>
        <fullName evidence="10">Transmembrane protein 107</fullName>
    </recommendedName>
</protein>
<accession>Q6UX40</accession>
<accession>A0PJV7</accession>
<accession>Q6NSE3</accession>
<accession>Q6ZRX9</accession>
<accession>Q96T82</accession>
<sequence length="140" mass="15503">MGRVSGLVPSRFLTLLAHLVVVITLFWSRDSNIQACLPLTFTPEEYDKQDIQLVAALSVTLGLFAVELAGFLSGVSMFNSTQSLISIGAHCSASVALSFFIFERWECTTYWYIFVFCSALPAVTEMALFVTVFGLKKKPF</sequence>
<evidence type="ECO:0000250" key="1">
    <source>
        <dbReference type="UniProtKB" id="Q9CPV0"/>
    </source>
</evidence>
<evidence type="ECO:0000255" key="2"/>
<evidence type="ECO:0000269" key="3">
    <source>
    </source>
</evidence>
<evidence type="ECO:0000269" key="4">
    <source>
    </source>
</evidence>
<evidence type="ECO:0000269" key="5">
    <source>
    </source>
</evidence>
<evidence type="ECO:0000303" key="6">
    <source>
    </source>
</evidence>
<evidence type="ECO:0000303" key="7">
    <source>
    </source>
</evidence>
<evidence type="ECO:0000303" key="8">
    <source ref="1"/>
</evidence>
<evidence type="ECO:0000305" key="9"/>
<evidence type="ECO:0000312" key="10">
    <source>
        <dbReference type="HGNC" id="HGNC:28128"/>
    </source>
</evidence>
<reference key="1">
    <citation type="submission" date="2000-10" db="EMBL/GenBank/DDBJ databases">
        <title>A novel gene from human dendritic cells.</title>
        <authorList>
            <person name="Xu X."/>
            <person name="Yang Y."/>
            <person name="Gao G."/>
            <person name="Xiao H."/>
            <person name="Chen Z."/>
            <person name="Han Z."/>
        </authorList>
    </citation>
    <scope>NUCLEOTIDE SEQUENCE [LARGE SCALE MRNA] (ISOFORM 4)</scope>
    <source>
        <tissue>Dendritic cell</tissue>
    </source>
</reference>
<reference key="2">
    <citation type="journal article" date="2003" name="Genome Res.">
        <title>The secreted protein discovery initiative (SPDI), a large-scale effort to identify novel human secreted and transmembrane proteins: a bioinformatics assessment.</title>
        <authorList>
            <person name="Clark H.F."/>
            <person name="Gurney A.L."/>
            <person name="Abaya E."/>
            <person name="Baker K."/>
            <person name="Baldwin D.T."/>
            <person name="Brush J."/>
            <person name="Chen J."/>
            <person name="Chow B."/>
            <person name="Chui C."/>
            <person name="Crowley C."/>
            <person name="Currell B."/>
            <person name="Deuel B."/>
            <person name="Dowd P."/>
            <person name="Eaton D."/>
            <person name="Foster J.S."/>
            <person name="Grimaldi C."/>
            <person name="Gu Q."/>
            <person name="Hass P.E."/>
            <person name="Heldens S."/>
            <person name="Huang A."/>
            <person name="Kim H.S."/>
            <person name="Klimowski L."/>
            <person name="Jin Y."/>
            <person name="Johnson S."/>
            <person name="Lee J."/>
            <person name="Lewis L."/>
            <person name="Liao D."/>
            <person name="Mark M.R."/>
            <person name="Robbie E."/>
            <person name="Sanchez C."/>
            <person name="Schoenfeld J."/>
            <person name="Seshagiri S."/>
            <person name="Simmons L."/>
            <person name="Singh J."/>
            <person name="Smith V."/>
            <person name="Stinson J."/>
            <person name="Vagts A."/>
            <person name="Vandlen R.L."/>
            <person name="Watanabe C."/>
            <person name="Wieand D."/>
            <person name="Woods K."/>
            <person name="Xie M.-H."/>
            <person name="Yansura D.G."/>
            <person name="Yi S."/>
            <person name="Yu G."/>
            <person name="Yuan J."/>
            <person name="Zhang M."/>
            <person name="Zhang Z."/>
            <person name="Goddard A.D."/>
            <person name="Wood W.I."/>
            <person name="Godowski P.J."/>
            <person name="Gray A.M."/>
        </authorList>
    </citation>
    <scope>NUCLEOTIDE SEQUENCE [LARGE SCALE MRNA] (ISOFORM 1)</scope>
</reference>
<reference key="3">
    <citation type="journal article" date="2004" name="Nat. Genet.">
        <title>Complete sequencing and characterization of 21,243 full-length human cDNAs.</title>
        <authorList>
            <person name="Ota T."/>
            <person name="Suzuki Y."/>
            <person name="Nishikawa T."/>
            <person name="Otsuki T."/>
            <person name="Sugiyama T."/>
            <person name="Irie R."/>
            <person name="Wakamatsu A."/>
            <person name="Hayashi K."/>
            <person name="Sato H."/>
            <person name="Nagai K."/>
            <person name="Kimura K."/>
            <person name="Makita H."/>
            <person name="Sekine M."/>
            <person name="Obayashi M."/>
            <person name="Nishi T."/>
            <person name="Shibahara T."/>
            <person name="Tanaka T."/>
            <person name="Ishii S."/>
            <person name="Yamamoto J."/>
            <person name="Saito K."/>
            <person name="Kawai Y."/>
            <person name="Isono Y."/>
            <person name="Nakamura Y."/>
            <person name="Nagahari K."/>
            <person name="Murakami K."/>
            <person name="Yasuda T."/>
            <person name="Iwayanagi T."/>
            <person name="Wagatsuma M."/>
            <person name="Shiratori A."/>
            <person name="Sudo H."/>
            <person name="Hosoiri T."/>
            <person name="Kaku Y."/>
            <person name="Kodaira H."/>
            <person name="Kondo H."/>
            <person name="Sugawara M."/>
            <person name="Takahashi M."/>
            <person name="Kanda K."/>
            <person name="Yokoi T."/>
            <person name="Furuya T."/>
            <person name="Kikkawa E."/>
            <person name="Omura Y."/>
            <person name="Abe K."/>
            <person name="Kamihara K."/>
            <person name="Katsuta N."/>
            <person name="Sato K."/>
            <person name="Tanikawa M."/>
            <person name="Yamazaki M."/>
            <person name="Ninomiya K."/>
            <person name="Ishibashi T."/>
            <person name="Yamashita H."/>
            <person name="Murakawa K."/>
            <person name="Fujimori K."/>
            <person name="Tanai H."/>
            <person name="Kimata M."/>
            <person name="Watanabe M."/>
            <person name="Hiraoka S."/>
            <person name="Chiba Y."/>
            <person name="Ishida S."/>
            <person name="Ono Y."/>
            <person name="Takiguchi S."/>
            <person name="Watanabe S."/>
            <person name="Yosida M."/>
            <person name="Hotuta T."/>
            <person name="Kusano J."/>
            <person name="Kanehori K."/>
            <person name="Takahashi-Fujii A."/>
            <person name="Hara H."/>
            <person name="Tanase T.-O."/>
            <person name="Nomura Y."/>
            <person name="Togiya S."/>
            <person name="Komai F."/>
            <person name="Hara R."/>
            <person name="Takeuchi K."/>
            <person name="Arita M."/>
            <person name="Imose N."/>
            <person name="Musashino K."/>
            <person name="Yuuki H."/>
            <person name="Oshima A."/>
            <person name="Sasaki N."/>
            <person name="Aotsuka S."/>
            <person name="Yoshikawa Y."/>
            <person name="Matsunawa H."/>
            <person name="Ichihara T."/>
            <person name="Shiohata N."/>
            <person name="Sano S."/>
            <person name="Moriya S."/>
            <person name="Momiyama H."/>
            <person name="Satoh N."/>
            <person name="Takami S."/>
            <person name="Terashima Y."/>
            <person name="Suzuki O."/>
            <person name="Nakagawa S."/>
            <person name="Senoh A."/>
            <person name="Mizoguchi H."/>
            <person name="Goto Y."/>
            <person name="Shimizu F."/>
            <person name="Wakebe H."/>
            <person name="Hishigaki H."/>
            <person name="Watanabe T."/>
            <person name="Sugiyama A."/>
            <person name="Takemoto M."/>
            <person name="Kawakami B."/>
            <person name="Yamazaki M."/>
            <person name="Watanabe K."/>
            <person name="Kumagai A."/>
            <person name="Itakura S."/>
            <person name="Fukuzumi Y."/>
            <person name="Fujimori Y."/>
            <person name="Komiyama M."/>
            <person name="Tashiro H."/>
            <person name="Tanigami A."/>
            <person name="Fujiwara T."/>
            <person name="Ono T."/>
            <person name="Yamada K."/>
            <person name="Fujii Y."/>
            <person name="Ozaki K."/>
            <person name="Hirao M."/>
            <person name="Ohmori Y."/>
            <person name="Kawabata A."/>
            <person name="Hikiji T."/>
            <person name="Kobatake N."/>
            <person name="Inagaki H."/>
            <person name="Ikema Y."/>
            <person name="Okamoto S."/>
            <person name="Okitani R."/>
            <person name="Kawakami T."/>
            <person name="Noguchi S."/>
            <person name="Itoh T."/>
            <person name="Shigeta K."/>
            <person name="Senba T."/>
            <person name="Matsumura K."/>
            <person name="Nakajima Y."/>
            <person name="Mizuno T."/>
            <person name="Morinaga M."/>
            <person name="Sasaki M."/>
            <person name="Togashi T."/>
            <person name="Oyama M."/>
            <person name="Hata H."/>
            <person name="Watanabe M."/>
            <person name="Komatsu T."/>
            <person name="Mizushima-Sugano J."/>
            <person name="Satoh T."/>
            <person name="Shirai Y."/>
            <person name="Takahashi Y."/>
            <person name="Nakagawa K."/>
            <person name="Okumura K."/>
            <person name="Nagase T."/>
            <person name="Nomura N."/>
            <person name="Kikuchi H."/>
            <person name="Masuho Y."/>
            <person name="Yamashita R."/>
            <person name="Nakai K."/>
            <person name="Yada T."/>
            <person name="Nakamura Y."/>
            <person name="Ohara O."/>
            <person name="Isogai T."/>
            <person name="Sugano S."/>
        </authorList>
    </citation>
    <scope>NUCLEOTIDE SEQUENCE [LARGE SCALE MRNA] (ISOFORM 2)</scope>
    <source>
        <tissue>Small intestine</tissue>
    </source>
</reference>
<reference key="4">
    <citation type="journal article" date="2006" name="Nature">
        <title>DNA sequence of human chromosome 17 and analysis of rearrangement in the human lineage.</title>
        <authorList>
            <person name="Zody M.C."/>
            <person name="Garber M."/>
            <person name="Adams D.J."/>
            <person name="Sharpe T."/>
            <person name="Harrow J."/>
            <person name="Lupski J.R."/>
            <person name="Nicholson C."/>
            <person name="Searle S.M."/>
            <person name="Wilming L."/>
            <person name="Young S.K."/>
            <person name="Abouelleil A."/>
            <person name="Allen N.R."/>
            <person name="Bi W."/>
            <person name="Bloom T."/>
            <person name="Borowsky M.L."/>
            <person name="Bugalter B.E."/>
            <person name="Butler J."/>
            <person name="Chang J.L."/>
            <person name="Chen C.-K."/>
            <person name="Cook A."/>
            <person name="Corum B."/>
            <person name="Cuomo C.A."/>
            <person name="de Jong P.J."/>
            <person name="DeCaprio D."/>
            <person name="Dewar K."/>
            <person name="FitzGerald M."/>
            <person name="Gilbert J."/>
            <person name="Gibson R."/>
            <person name="Gnerre S."/>
            <person name="Goldstein S."/>
            <person name="Grafham D.V."/>
            <person name="Grocock R."/>
            <person name="Hafez N."/>
            <person name="Hagopian D.S."/>
            <person name="Hart E."/>
            <person name="Norman C.H."/>
            <person name="Humphray S."/>
            <person name="Jaffe D.B."/>
            <person name="Jones M."/>
            <person name="Kamal M."/>
            <person name="Khodiyar V.K."/>
            <person name="LaButti K."/>
            <person name="Laird G."/>
            <person name="Lehoczky J."/>
            <person name="Liu X."/>
            <person name="Lokyitsang T."/>
            <person name="Loveland J."/>
            <person name="Lui A."/>
            <person name="Macdonald P."/>
            <person name="Major J.E."/>
            <person name="Matthews L."/>
            <person name="Mauceli E."/>
            <person name="McCarroll S.A."/>
            <person name="Mihalev A.H."/>
            <person name="Mudge J."/>
            <person name="Nguyen C."/>
            <person name="Nicol R."/>
            <person name="O'Leary S.B."/>
            <person name="Osoegawa K."/>
            <person name="Schwartz D.C."/>
            <person name="Shaw-Smith C."/>
            <person name="Stankiewicz P."/>
            <person name="Steward C."/>
            <person name="Swarbreck D."/>
            <person name="Venkataraman V."/>
            <person name="Whittaker C.A."/>
            <person name="Yang X."/>
            <person name="Zimmer A.R."/>
            <person name="Bradley A."/>
            <person name="Hubbard T."/>
            <person name="Birren B.W."/>
            <person name="Rogers J."/>
            <person name="Lander E.S."/>
            <person name="Nusbaum C."/>
        </authorList>
    </citation>
    <scope>NUCLEOTIDE SEQUENCE [LARGE SCALE GENOMIC DNA]</scope>
</reference>
<reference key="5">
    <citation type="journal article" date="2004" name="Genome Res.">
        <title>The status, quality, and expansion of the NIH full-length cDNA project: the Mammalian Gene Collection (MGC).</title>
        <authorList>
            <consortium name="The MGC Project Team"/>
        </authorList>
    </citation>
    <scope>NUCLEOTIDE SEQUENCE [LARGE SCALE MRNA] (ISOFORMS 1 AND 3)</scope>
    <source>
        <tissue>Testis</tissue>
    </source>
</reference>
<reference key="6">
    <citation type="journal article" date="2015" name="Hum. Mol. Genet.">
        <title>Identification of a novel MKS locus defined by TMEM107 mutation.</title>
        <authorList>
            <person name="Shaheen R."/>
            <person name="Almoisheer A."/>
            <person name="Faqeih E."/>
            <person name="Babay Z."/>
            <person name="Monies D."/>
            <person name="Tassan N."/>
            <person name="Abouelhoda M."/>
            <person name="Kurdi W."/>
            <person name="Al Mardawi E."/>
            <person name="Khalil M.M."/>
            <person name="Seidahmed M.Z."/>
            <person name="Alnemer M."/>
            <person name="Alsahan N."/>
            <person name="Sogaty S."/>
            <person name="Alhashem A."/>
            <person name="Singh A."/>
            <person name="Goyal M."/>
            <person name="Kapoor S."/>
            <person name="Alomar R."/>
            <person name="Ibrahim N."/>
            <person name="Alkuraya F.S."/>
        </authorList>
    </citation>
    <scope>INVOLVEMENT IN MKS13</scope>
</reference>
<reference key="7">
    <citation type="journal article" date="2016" name="Hum. Mutat.">
        <title>TMEM107 Is a Critical Regulator of Ciliary Protein Composition and Is Mutated in Orofaciodigital Syndrome.</title>
        <authorList>
            <person name="Shylo N.A."/>
            <person name="Christopher K.J."/>
            <person name="Iglesias A."/>
            <person name="Daluiski A."/>
            <person name="Weatherbee S.D."/>
        </authorList>
    </citation>
    <scope>VARIANT OFD16 PHE-100 DEL</scope>
    <scope>CHARACTERIZATION OF VARIANT OFD16 PHE-100 DEL</scope>
    <scope>FUNCTION</scope>
</reference>
<reference key="8">
    <citation type="journal article" date="2016" name="Nat. Cell Biol.">
        <title>TMEM107 recruits ciliopathy proteins to subdomains of the ciliary transition zone and causes Joubert syndrome.</title>
        <authorList>
            <person name="Lambacher N.J."/>
            <person name="Bruel A.L."/>
            <person name="van Dam T.J."/>
            <person name="Szymanska K."/>
            <person name="Slaats G.G."/>
            <person name="Kuhns S."/>
            <person name="McManus G.J."/>
            <person name="Kennedy J.E."/>
            <person name="Gaff K."/>
            <person name="Wu K.M."/>
            <person name="van der Lee R."/>
            <person name="Burglen L."/>
            <person name="Doummar D."/>
            <person name="Riviere J.B."/>
            <person name="Faivre L."/>
            <person name="Attie-Bitach T."/>
            <person name="Saunier S."/>
            <person name="Curd A."/>
            <person name="Peckham M."/>
            <person name="Giles R.H."/>
            <person name="Johnson C.A."/>
            <person name="Huynen M.A."/>
            <person name="Thauvin-Robinet C."/>
            <person name="Blacque O.E."/>
        </authorList>
    </citation>
    <scope>SUBCELLULAR LOCATION</scope>
    <scope>INVOLVEMENT IN OFD16</scope>
    <scope>VARIANTS OFD16 GLY-45 AND GLU-106 DEL</scope>
    <scope>CHARACTERIZATION OF VARIANT OFD16 GLY-45</scope>
    <scope>VARIANT MKS13 PHE-100 DEL</scope>
    <scope>INTERACTION WITH TMEM237; TMEM231; MKS1 AND TMEM216</scope>
    <scope>IDENTIFICATION IN THE TECTONIC-LIKE COMPLEX</scope>
</reference>
<comment type="function">
    <text evidence="1 4">Plays a role in cilia formation and embryonic patterning. Requires for normal Sonic hedgehog (Shh) signaling in the neural tube and acts in combination with GLI2 and GLI3 to pattern ventral and intermediate neuronal cell types (By similarity). During ciliogenesis regulates the ciliary transition zone localization of some MKS complex proteins (PubMed:26518474).</text>
</comment>
<comment type="subunit">
    <text evidence="5">Part of the tectonic-like complex (also named B9 complex). Interacts with TMEM237, TMEM231, MKS1 and TMEM216.</text>
</comment>
<comment type="interaction">
    <interactant intactId="EBI-12845616">
        <id>Q6UX40</id>
    </interactant>
    <interactant intactId="EBI-2808854">
        <id>Q92482</id>
        <label>AQP3</label>
    </interactant>
    <organismsDiffer>false</organismsDiffer>
    <experiments>3</experiments>
</comment>
<comment type="interaction">
    <interactant intactId="EBI-12845616">
        <id>Q6UX40</id>
    </interactant>
    <interactant intactId="EBI-13059134">
        <id>Q13520</id>
        <label>AQP6</label>
    </interactant>
    <organismsDiffer>false</organismsDiffer>
    <experiments>3</experiments>
</comment>
<comment type="interaction">
    <interactant intactId="EBI-12845616">
        <id>Q6UX40</id>
    </interactant>
    <interactant intactId="EBI-700794">
        <id>Q13323</id>
        <label>BIK</label>
    </interactant>
    <organismsDiffer>false</organismsDiffer>
    <experiments>3</experiments>
</comment>
<comment type="interaction">
    <interactant intactId="EBI-12845616">
        <id>Q6UX40</id>
    </interactant>
    <interactant intactId="EBI-953695">
        <id>O00585</id>
        <label>CCL21</label>
    </interactant>
    <organismsDiffer>false</organismsDiffer>
    <experiments>3</experiments>
</comment>
<comment type="interaction">
    <interactant intactId="EBI-12845616">
        <id>Q6UX40</id>
    </interactant>
    <interactant intactId="EBI-525714">
        <id>P25942</id>
        <label>CD40</label>
    </interactant>
    <organismsDiffer>false</organismsDiffer>
    <experiments>3</experiments>
</comment>
<comment type="interaction">
    <interactant intactId="EBI-12845616">
        <id>Q6UX40</id>
    </interactant>
    <interactant intactId="EBI-7797864">
        <id>P11912</id>
        <label>CD79A</label>
    </interactant>
    <organismsDiffer>false</organismsDiffer>
    <experiments>3</experiments>
</comment>
<comment type="interaction">
    <interactant intactId="EBI-12845616">
        <id>Q6UX40</id>
    </interactant>
    <interactant intactId="EBI-11291074">
        <id>Q9BQT9</id>
        <label>CLSTN3</label>
    </interactant>
    <organismsDiffer>false</organismsDiffer>
    <experiments>3</experiments>
</comment>
<comment type="interaction">
    <interactant intactId="EBI-12845616">
        <id>Q6UX40</id>
    </interactant>
    <interactant intactId="EBI-8787095">
        <id>O00559</id>
        <label>EBAG9</label>
    </interactant>
    <organismsDiffer>false</organismsDiffer>
    <experiments>3</experiments>
</comment>
<comment type="interaction">
    <interactant intactId="EBI-12845616">
        <id>Q6UX40</id>
    </interactant>
    <interactant intactId="EBI-781551">
        <id>Q9Y282</id>
        <label>ERGIC3</label>
    </interactant>
    <organismsDiffer>false</organismsDiffer>
    <experiments>3</experiments>
</comment>
<comment type="interaction">
    <interactant intactId="EBI-12845616">
        <id>Q6UX40</id>
    </interactant>
    <interactant intactId="EBI-17640610">
        <id>P34910-2</id>
        <label>EVI2B</label>
    </interactant>
    <organismsDiffer>false</organismsDiffer>
    <experiments>3</experiments>
</comment>
<comment type="interaction">
    <interactant intactId="EBI-12845616">
        <id>Q6UX40</id>
    </interactant>
    <interactant intactId="EBI-18304435">
        <id>Q5JX71</id>
        <label>FAM209A</label>
    </interactant>
    <organismsDiffer>false</organismsDiffer>
    <experiments>3</experiments>
</comment>
<comment type="interaction">
    <interactant intactId="EBI-12845616">
        <id>Q6UX40</id>
    </interactant>
    <interactant intactId="EBI-18938272">
        <id>Q96KR6</id>
        <label>FAM210B</label>
    </interactant>
    <organismsDiffer>false</organismsDiffer>
    <experiments>3</experiments>
</comment>
<comment type="interaction">
    <interactant intactId="EBI-12845616">
        <id>Q6UX40</id>
    </interactant>
    <interactant intactId="EBI-750433">
        <id>P36382</id>
        <label>GJA5</label>
    </interactant>
    <organismsDiffer>false</organismsDiffer>
    <experiments>3</experiments>
</comment>
<comment type="interaction">
    <interactant intactId="EBI-12845616">
        <id>Q6UX40</id>
    </interactant>
    <interactant intactId="EBI-17458373">
        <id>P48165</id>
        <label>GJA8</label>
    </interactant>
    <organismsDiffer>false</organismsDiffer>
    <experiments>3</experiments>
</comment>
<comment type="interaction">
    <interactant intactId="EBI-12845616">
        <id>Q6UX40</id>
    </interactant>
    <interactant intactId="EBI-11721746">
        <id>Q8TED1</id>
        <label>GPX8</label>
    </interactant>
    <organismsDiffer>false</organismsDiffer>
    <experiments>3</experiments>
</comment>
<comment type="interaction">
    <interactant intactId="EBI-12845616">
        <id>Q6UX40</id>
    </interactant>
    <interactant intactId="EBI-6426121">
        <id>P22460</id>
        <label>KCNA5</label>
    </interactant>
    <organismsDiffer>false</organismsDiffer>
    <experiments>3</experiments>
</comment>
<comment type="interaction">
    <interactant intactId="EBI-12845616">
        <id>Q6UX40</id>
    </interactant>
    <interactant intactId="EBI-12017638">
        <id>P48051</id>
        <label>KCNJ6</label>
    </interactant>
    <organismsDiffer>false</organismsDiffer>
    <experiments>3</experiments>
</comment>
<comment type="interaction">
    <interactant intactId="EBI-12845616">
        <id>Q6UX40</id>
    </interactant>
    <interactant intactId="EBI-2820517">
        <id>Q8TAF8</id>
        <label>LHFPL5</label>
    </interactant>
    <organismsDiffer>false</organismsDiffer>
    <experiments>3</experiments>
</comment>
<comment type="interaction">
    <interactant intactId="EBI-12845616">
        <id>Q6UX40</id>
    </interactant>
    <interactant intactId="EBI-724754">
        <id>O14880</id>
        <label>MGST3</label>
    </interactant>
    <organismsDiffer>false</organismsDiffer>
    <experiments>3</experiments>
</comment>
<comment type="interaction">
    <interactant intactId="EBI-12845616">
        <id>Q6UX40</id>
    </interactant>
    <interactant intactId="EBI-719269">
        <id>Q9NXB0</id>
        <label>MKS1</label>
    </interactant>
    <organismsDiffer>false</organismsDiffer>
    <experiments>2</experiments>
</comment>
<comment type="interaction">
    <interactant intactId="EBI-12845616">
        <id>Q6UX40</id>
    </interactant>
    <interactant intactId="EBI-12806656">
        <id>Q96HJ5</id>
        <label>MS4A3</label>
    </interactant>
    <organismsDiffer>false</organismsDiffer>
    <experiments>3</experiments>
</comment>
<comment type="interaction">
    <interactant intactId="EBI-12845616">
        <id>Q6UX40</id>
    </interactant>
    <interactant intactId="EBI-716063">
        <id>Q13113</id>
        <label>PDZK1IP1</label>
    </interactant>
    <organismsDiffer>false</organismsDiffer>
    <experiments>3</experiments>
</comment>
<comment type="interaction">
    <interactant intactId="EBI-12845616">
        <id>Q6UX40</id>
    </interactant>
    <interactant intactId="EBI-1050125">
        <id>O15173</id>
        <label>PGRMC2</label>
    </interactant>
    <organismsDiffer>false</organismsDiffer>
    <experiments>3</experiments>
</comment>
<comment type="interaction">
    <interactant intactId="EBI-12845616">
        <id>Q6UX40</id>
    </interactant>
    <interactant intactId="EBI-17630288">
        <id>P57054</id>
        <label>PIGP</label>
    </interactant>
    <organismsDiffer>false</organismsDiffer>
    <experiments>3</experiments>
</comment>
<comment type="interaction">
    <interactant intactId="EBI-12845616">
        <id>Q6UX40</id>
    </interactant>
    <interactant intactId="EBI-3920694">
        <id>Q9NR31</id>
        <label>SAR1A</label>
    </interactant>
    <organismsDiffer>false</organismsDiffer>
    <experiments>3</experiments>
</comment>
<comment type="interaction">
    <interactant intactId="EBI-12845616">
        <id>Q6UX40</id>
    </interactant>
    <interactant intactId="EBI-18159983">
        <id>Q3KNW5</id>
        <label>SLC10A6</label>
    </interactant>
    <organismsDiffer>false</organismsDiffer>
    <experiments>3</experiments>
</comment>
<comment type="interaction">
    <interactant intactId="EBI-12845616">
        <id>Q6UX40</id>
    </interactant>
    <interactant intactId="EBI-8644112">
        <id>Q9BRI3</id>
        <label>SLC30A2</label>
    </interactant>
    <organismsDiffer>false</organismsDiffer>
    <experiments>3</experiments>
</comment>
<comment type="interaction">
    <interactant intactId="EBI-12845616">
        <id>Q6UX40</id>
    </interactant>
    <interactant intactId="EBI-17295964">
        <id>Q9NQQ7-3</id>
        <label>SLC35C2</label>
    </interactant>
    <organismsDiffer>false</organismsDiffer>
    <experiments>3</experiments>
</comment>
<comment type="interaction">
    <interactant intactId="EBI-12845616">
        <id>Q6UX40</id>
    </interactant>
    <interactant intactId="EBI-12898013">
        <id>Q9NP94</id>
        <label>SLC39A2</label>
    </interactant>
    <organismsDiffer>false</organismsDiffer>
    <experiments>3</experiments>
</comment>
<comment type="interaction">
    <interactant intactId="EBI-12845616">
        <id>Q6UX40</id>
    </interactant>
    <interactant intactId="EBI-8032987">
        <id>Q8N9I0</id>
        <label>SYT2</label>
    </interactant>
    <organismsDiffer>false</organismsDiffer>
    <experiments>3</experiments>
</comment>
<comment type="interaction">
    <interactant intactId="EBI-12845616">
        <id>Q6UX40</id>
    </interactant>
    <interactant intactId="EBI-726691">
        <id>Q8WY91</id>
        <label>THAP4</label>
    </interactant>
    <organismsDiffer>false</organismsDiffer>
    <experiments>3</experiments>
</comment>
<comment type="interaction">
    <interactant intactId="EBI-12845616">
        <id>Q6UX40</id>
    </interactant>
    <interactant intactId="EBI-3915978">
        <id>Q96A25</id>
        <label>TMEM106A</label>
    </interactant>
    <organismsDiffer>false</organismsDiffer>
    <experiments>3</experiments>
</comment>
<comment type="interaction">
    <interactant intactId="EBI-12845616">
        <id>Q6UX40</id>
    </interactant>
    <interactant intactId="EBI-7238458">
        <id>Q8IV31</id>
        <label>TMEM139</label>
    </interactant>
    <organismsDiffer>false</organismsDiffer>
    <experiments>3</experiments>
</comment>
<comment type="interaction">
    <interactant intactId="EBI-12845616">
        <id>Q6UX40</id>
    </interactant>
    <interactant intactId="EBI-17684533">
        <id>Q9NRX6</id>
        <label>TMEM167B</label>
    </interactant>
    <organismsDiffer>false</organismsDiffer>
    <experiments>3</experiments>
</comment>
<comment type="interaction">
    <interactant intactId="EBI-12845616">
        <id>Q6UX40</id>
    </interactant>
    <interactant intactId="EBI-8642211">
        <id>Q8WY98</id>
        <label>TMEM234</label>
    </interactant>
    <organismsDiffer>false</organismsDiffer>
    <experiments>3</experiments>
</comment>
<comment type="interaction">
    <interactant intactId="EBI-12845616">
        <id>Q6UX40</id>
    </interactant>
    <interactant intactId="EBI-10982110">
        <id>Q96Q45-2</id>
        <label>TMEM237</label>
    </interactant>
    <organismsDiffer>false</organismsDiffer>
    <experiments>3</experiments>
</comment>
<comment type="interaction">
    <interactant intactId="EBI-12845616">
        <id>Q6UX40</id>
    </interactant>
    <interactant intactId="EBI-726044">
        <id>Q9NW97</id>
        <label>TMEM51</label>
    </interactant>
    <organismsDiffer>false</organismsDiffer>
    <experiments>3</experiments>
</comment>
<comment type="interaction">
    <interactant intactId="EBI-12845616">
        <id>Q6UX40</id>
    </interactant>
    <interactant intactId="EBI-18178701">
        <id>Q4KMG9</id>
        <label>TMEM52B</label>
    </interactant>
    <organismsDiffer>false</organismsDiffer>
    <experiments>3</experiments>
</comment>
<comment type="interaction">
    <interactant intactId="EBI-12845616">
        <id>Q6UX40</id>
    </interactant>
    <interactant intactId="EBI-11742770">
        <id>Q96HE8</id>
        <label>TMEM80</label>
    </interactant>
    <organismsDiffer>false</organismsDiffer>
    <experiments>3</experiments>
</comment>
<comment type="interaction">
    <interactant intactId="EBI-12845616">
        <id>Q6UX40</id>
    </interactant>
    <interactant intactId="EBI-2548832">
        <id>Q8N661</id>
        <label>TMEM86B</label>
    </interactant>
    <organismsDiffer>false</organismsDiffer>
    <experiments>3</experiments>
</comment>
<comment type="interaction">
    <interactant intactId="EBI-12845616">
        <id>Q6UX40</id>
    </interactant>
    <interactant intactId="EBI-1055364">
        <id>Q3ZAQ7</id>
        <label>VMA21</label>
    </interactant>
    <organismsDiffer>false</organismsDiffer>
    <experiments>3</experiments>
</comment>
<comment type="subcellular location">
    <subcellularLocation>
        <location evidence="9">Membrane</location>
        <topology evidence="9">Multi-pass membrane protein</topology>
    </subcellularLocation>
    <subcellularLocation>
        <location evidence="5">Cell projection</location>
        <location evidence="5">Cilium</location>
    </subcellularLocation>
    <text evidence="5">Localizes at the transition zone, a region between the basal body and the ciliary axoneme.</text>
</comment>
<comment type="alternative products">
    <event type="alternative splicing"/>
    <isoform>
        <id>Q6UX40-1</id>
        <name>1</name>
        <sequence type="displayed"/>
    </isoform>
    <isoform>
        <id>Q6UX40-2</id>
        <name>2</name>
        <sequence type="described" ref="VSP_021210 VSP_021211"/>
    </isoform>
    <isoform>
        <id>Q6UX40-3</id>
        <name>3</name>
        <sequence type="described" ref="VSP_021212 VSP_021213"/>
    </isoform>
    <isoform>
        <id>Q6UX40-4</id>
        <name>4</name>
        <sequence type="described" ref="VSP_021212"/>
    </isoform>
</comment>
<comment type="disease" evidence="3 5">
    <disease id="DI-05035">
        <name>Meckel syndrome 13</name>
        <acronym>MKS13</acronym>
        <description>A form of Meckel syndrome, a disorder characterized by a combination of renal cysts and variably associated features including developmental anomalies of the central nervous system (typically encephalocele), hepatic ductal dysplasia and cysts, and polydactyly.</description>
        <dbReference type="MIM" id="617562"/>
    </disease>
    <text>The disease is caused by variants affecting the gene represented in this entry.</text>
</comment>
<comment type="disease" evidence="4 5">
    <disease id="DI-05037">
        <name>Orofaciodigital syndrome 16</name>
        <acronym>OFD16</acronym>
        <description>A form of orofaciodigital syndrome, a group of heterogeneous disorders characterized by malformations of the oral cavity, face and digits, and associated phenotypic abnormalities that lead to the delineation of various subtypes. OFD16 features include postaxial polydactyly of the hands and feet, multiple tongue cysts, and dysmorphic features, including frontal narrowing, short palpebral fissures, flat nasal bridge, retrognathia, and low-set ears. Neurologic features include delayed psychomotor development and severe cognitive impairment. OFD16 inheritance is autosomal recessive.</description>
        <dbReference type="MIM" id="617563"/>
    </disease>
    <text>The disease is caused by variants affecting the gene represented in this entry.</text>
</comment>
<comment type="sequence caution" evidence="9">
    <conflict type="frameshift">
        <sequence resource="EMBL-CDS" id="AAK38512"/>
    </conflict>
</comment>
<proteinExistence type="evidence at protein level"/>
<gene>
    <name evidence="10" type="primary">TMEM107</name>
    <name type="ORF">DC20</name>
    <name type="ORF">UNQ638/PRO1268</name>
</gene>
<organism>
    <name type="scientific">Homo sapiens</name>
    <name type="common">Human</name>
    <dbReference type="NCBI Taxonomy" id="9606"/>
    <lineage>
        <taxon>Eukaryota</taxon>
        <taxon>Metazoa</taxon>
        <taxon>Chordata</taxon>
        <taxon>Craniata</taxon>
        <taxon>Vertebrata</taxon>
        <taxon>Euteleostomi</taxon>
        <taxon>Mammalia</taxon>
        <taxon>Eutheria</taxon>
        <taxon>Euarchontoglires</taxon>
        <taxon>Primates</taxon>
        <taxon>Haplorrhini</taxon>
        <taxon>Catarrhini</taxon>
        <taxon>Hominidae</taxon>
        <taxon>Homo</taxon>
    </lineage>
</organism>
<feature type="chain" id="PRO_0000254541" description="Transmembrane protein 107">
    <location>
        <begin position="1"/>
        <end position="140"/>
    </location>
</feature>
<feature type="transmembrane region" description="Helical" evidence="2">
    <location>
        <begin position="7"/>
        <end position="27"/>
    </location>
</feature>
<feature type="transmembrane region" description="Helical" evidence="2">
    <location>
        <begin position="53"/>
        <end position="73"/>
    </location>
</feature>
<feature type="transmembrane region" description="Helical" evidence="2">
    <location>
        <begin position="83"/>
        <end position="103"/>
    </location>
</feature>
<feature type="transmembrane region" description="Helical" evidence="2">
    <location>
        <begin position="113"/>
        <end position="133"/>
    </location>
</feature>
<feature type="glycosylation site" description="N-linked (GlcNAc...) asparagine" evidence="2">
    <location>
        <position position="79"/>
    </location>
</feature>
<feature type="splice variant" id="VSP_021210" description="In isoform 2." evidence="6">
    <original>D</original>
    <variation>VRPTAALNPSPFPSLSGPSPTLPPPSVLPSWVFLFPAAPRPALQPAPFSLLSAGWWPRSLSPWASLQWSWPVSSQESPCSTAPRASSVSFLPAHLSHTTHFYQDSLQPPDTIVSAVANPSSSKIFNDVLNPAVY</variation>
    <location>
        <position position="30"/>
    </location>
</feature>
<feature type="splice variant" id="VSP_021211" description="In isoform 2." evidence="6">
    <location>
        <begin position="31"/>
        <end position="140"/>
    </location>
</feature>
<feature type="splice variant" id="VSP_021212" description="In isoform 3 and isoform 4." evidence="7 8">
    <original>Q</original>
    <variation>HPLPLCR</variation>
    <location>
        <position position="52"/>
    </location>
</feature>
<feature type="splice variant" id="VSP_021213" description="In isoform 3." evidence="7">
    <original>WYIFVFCS</original>
    <variation>C</variation>
    <location>
        <begin position="111"/>
        <end position="118"/>
    </location>
</feature>
<feature type="sequence variant" id="VAR_079328" description="In OFD16; does not affect subcellular location at ciliary transition zone; dbSNP:rs1555526172." evidence="5">
    <original>E</original>
    <variation>G</variation>
    <location>
        <position position="45"/>
    </location>
</feature>
<feature type="sequence variant" id="VAR_079329" description="In MKS13 and OFD16; does not affect subcellular location at ciliary transition zone; significantly decreases cilium assembly from patient's skin primary fibroblast; impairs protein localization to cilium from patient's skin primary fibroblast; dbSNP:rs752171066." evidence="4 5">
    <location>
        <position position="100"/>
    </location>
</feature>